<feature type="chain" id="PRO_0000368415" description="ATP synthase subunit b">
    <location>
        <begin position="1"/>
        <end position="156"/>
    </location>
</feature>
<feature type="transmembrane region" description="Helical" evidence="1">
    <location>
        <begin position="5"/>
        <end position="25"/>
    </location>
</feature>
<gene>
    <name evidence="1" type="primary">atpF</name>
    <name type="ordered locus">Csal_3288</name>
</gene>
<proteinExistence type="inferred from homology"/>
<reference key="1">
    <citation type="journal article" date="2011" name="Stand. Genomic Sci.">
        <title>Complete genome sequence of the halophilic and highly halotolerant Chromohalobacter salexigens type strain (1H11(T)).</title>
        <authorList>
            <person name="Copeland A."/>
            <person name="O'Connor K."/>
            <person name="Lucas S."/>
            <person name="Lapidus A."/>
            <person name="Berry K.W."/>
            <person name="Detter J.C."/>
            <person name="Del Rio T.G."/>
            <person name="Hammon N."/>
            <person name="Dalin E."/>
            <person name="Tice H."/>
            <person name="Pitluck S."/>
            <person name="Bruce D."/>
            <person name="Goodwin L."/>
            <person name="Han C."/>
            <person name="Tapia R."/>
            <person name="Saunders E."/>
            <person name="Schmutz J."/>
            <person name="Brettin T."/>
            <person name="Larimer F."/>
            <person name="Land M."/>
            <person name="Hauser L."/>
            <person name="Vargas C."/>
            <person name="Nieto J.J."/>
            <person name="Kyrpides N.C."/>
            <person name="Ivanova N."/>
            <person name="Goker M."/>
            <person name="Klenk H.P."/>
            <person name="Csonka L.N."/>
            <person name="Woyke T."/>
        </authorList>
    </citation>
    <scope>NUCLEOTIDE SEQUENCE [LARGE SCALE GENOMIC DNA]</scope>
    <source>
        <strain>ATCC BAA-138 / DSM 3043 / CIP 106854 / NCIMB 13768 / 1H11</strain>
    </source>
</reference>
<protein>
    <recommendedName>
        <fullName evidence="1">ATP synthase subunit b</fullName>
    </recommendedName>
    <alternativeName>
        <fullName evidence="1">ATP synthase F(0) sector subunit b</fullName>
    </alternativeName>
    <alternativeName>
        <fullName evidence="1">ATPase subunit I</fullName>
    </alternativeName>
    <alternativeName>
        <fullName evidence="1">F-type ATPase subunit b</fullName>
        <shortName evidence="1">F-ATPase subunit b</shortName>
    </alternativeName>
</protein>
<comment type="function">
    <text evidence="1">F(1)F(0) ATP synthase produces ATP from ADP in the presence of a proton or sodium gradient. F-type ATPases consist of two structural domains, F(1) containing the extramembraneous catalytic core and F(0) containing the membrane proton channel, linked together by a central stalk and a peripheral stalk. During catalysis, ATP synthesis in the catalytic domain of F(1) is coupled via a rotary mechanism of the central stalk subunits to proton translocation.</text>
</comment>
<comment type="function">
    <text evidence="1">Component of the F(0) channel, it forms part of the peripheral stalk, linking F(1) to F(0).</text>
</comment>
<comment type="subunit">
    <text evidence="1">F-type ATPases have 2 components, F(1) - the catalytic core - and F(0) - the membrane proton channel. F(1) has five subunits: alpha(3), beta(3), gamma(1), delta(1), epsilon(1). F(0) has three main subunits: a(1), b(2) and c(10-14). The alpha and beta chains form an alternating ring which encloses part of the gamma chain. F(1) is attached to F(0) by a central stalk formed by the gamma and epsilon chains, while a peripheral stalk is formed by the delta and b chains.</text>
</comment>
<comment type="subcellular location">
    <subcellularLocation>
        <location evidence="1">Cell inner membrane</location>
        <topology evidence="1">Single-pass membrane protein</topology>
    </subcellularLocation>
</comment>
<comment type="similarity">
    <text evidence="1">Belongs to the ATPase B chain family.</text>
</comment>
<organism>
    <name type="scientific">Chromohalobacter salexigens (strain ATCC BAA-138 / DSM 3043 / CIP 106854 / NCIMB 13768 / 1H11)</name>
    <dbReference type="NCBI Taxonomy" id="290398"/>
    <lineage>
        <taxon>Bacteria</taxon>
        <taxon>Pseudomonadati</taxon>
        <taxon>Pseudomonadota</taxon>
        <taxon>Gammaproteobacteria</taxon>
        <taxon>Oceanospirillales</taxon>
        <taxon>Halomonadaceae</taxon>
        <taxon>Chromohalobacter</taxon>
    </lineage>
</organism>
<keyword id="KW-0066">ATP synthesis</keyword>
<keyword id="KW-0997">Cell inner membrane</keyword>
<keyword id="KW-1003">Cell membrane</keyword>
<keyword id="KW-0138">CF(0)</keyword>
<keyword id="KW-0375">Hydrogen ion transport</keyword>
<keyword id="KW-0406">Ion transport</keyword>
<keyword id="KW-0472">Membrane</keyword>
<keyword id="KW-1185">Reference proteome</keyword>
<keyword id="KW-0812">Transmembrane</keyword>
<keyword id="KW-1133">Transmembrane helix</keyword>
<keyword id="KW-0813">Transport</keyword>
<dbReference type="EMBL" id="CP000285">
    <property type="protein sequence ID" value="ABE60632.1"/>
    <property type="molecule type" value="Genomic_DNA"/>
</dbReference>
<dbReference type="RefSeq" id="WP_011508578.1">
    <property type="nucleotide sequence ID" value="NC_007963.1"/>
</dbReference>
<dbReference type="SMR" id="Q1QSC6"/>
<dbReference type="STRING" id="290398.Csal_3288"/>
<dbReference type="GeneID" id="95335979"/>
<dbReference type="KEGG" id="csa:Csal_3288"/>
<dbReference type="eggNOG" id="COG0711">
    <property type="taxonomic scope" value="Bacteria"/>
</dbReference>
<dbReference type="HOGENOM" id="CLU_079215_4_5_6"/>
<dbReference type="OrthoDB" id="9788020at2"/>
<dbReference type="Proteomes" id="UP000000239">
    <property type="component" value="Chromosome"/>
</dbReference>
<dbReference type="GO" id="GO:0005886">
    <property type="term" value="C:plasma membrane"/>
    <property type="evidence" value="ECO:0007669"/>
    <property type="project" value="UniProtKB-SubCell"/>
</dbReference>
<dbReference type="GO" id="GO:0045259">
    <property type="term" value="C:proton-transporting ATP synthase complex"/>
    <property type="evidence" value="ECO:0007669"/>
    <property type="project" value="UniProtKB-KW"/>
</dbReference>
<dbReference type="GO" id="GO:0046933">
    <property type="term" value="F:proton-transporting ATP synthase activity, rotational mechanism"/>
    <property type="evidence" value="ECO:0007669"/>
    <property type="project" value="UniProtKB-UniRule"/>
</dbReference>
<dbReference type="GO" id="GO:0046961">
    <property type="term" value="F:proton-transporting ATPase activity, rotational mechanism"/>
    <property type="evidence" value="ECO:0007669"/>
    <property type="project" value="TreeGrafter"/>
</dbReference>
<dbReference type="CDD" id="cd06503">
    <property type="entry name" value="ATP-synt_Fo_b"/>
    <property type="match status" value="1"/>
</dbReference>
<dbReference type="FunFam" id="1.20.5.620:FF:000001">
    <property type="entry name" value="ATP synthase subunit b"/>
    <property type="match status" value="1"/>
</dbReference>
<dbReference type="Gene3D" id="6.10.250.1580">
    <property type="match status" value="1"/>
</dbReference>
<dbReference type="HAMAP" id="MF_01398">
    <property type="entry name" value="ATP_synth_b_bprime"/>
    <property type="match status" value="1"/>
</dbReference>
<dbReference type="InterPro" id="IPR028987">
    <property type="entry name" value="ATP_synth_B-like_membr_sf"/>
</dbReference>
<dbReference type="InterPro" id="IPR002146">
    <property type="entry name" value="ATP_synth_b/b'su_bac/chlpt"/>
</dbReference>
<dbReference type="InterPro" id="IPR005864">
    <property type="entry name" value="ATP_synth_F0_bsu_bac"/>
</dbReference>
<dbReference type="InterPro" id="IPR050059">
    <property type="entry name" value="ATP_synthase_B_chain"/>
</dbReference>
<dbReference type="NCBIfam" id="TIGR01144">
    <property type="entry name" value="ATP_synt_b"/>
    <property type="match status" value="1"/>
</dbReference>
<dbReference type="NCBIfam" id="NF004411">
    <property type="entry name" value="PRK05759.1-2"/>
    <property type="match status" value="1"/>
</dbReference>
<dbReference type="NCBIfam" id="NF004413">
    <property type="entry name" value="PRK05759.1-4"/>
    <property type="match status" value="1"/>
</dbReference>
<dbReference type="PANTHER" id="PTHR33445:SF1">
    <property type="entry name" value="ATP SYNTHASE SUBUNIT B"/>
    <property type="match status" value="1"/>
</dbReference>
<dbReference type="PANTHER" id="PTHR33445">
    <property type="entry name" value="ATP SYNTHASE SUBUNIT B', CHLOROPLASTIC"/>
    <property type="match status" value="1"/>
</dbReference>
<dbReference type="Pfam" id="PF00430">
    <property type="entry name" value="ATP-synt_B"/>
    <property type="match status" value="1"/>
</dbReference>
<dbReference type="SUPFAM" id="SSF81573">
    <property type="entry name" value="F1F0 ATP synthase subunit B, membrane domain"/>
    <property type="match status" value="1"/>
</dbReference>
<evidence type="ECO:0000255" key="1">
    <source>
        <dbReference type="HAMAP-Rule" id="MF_01398"/>
    </source>
</evidence>
<sequence>MNLNLTLIGQAIAFAVFVWFCMKFVWPPVMQALQERQKKIADGLDAASRATRDLELAQEQAAEQLKESKEQAAQIIEQAHKRANQMIEEARDNARLEGERMIESARGEIEQETQRAKEELRTQVAALAIQGAERILDSSIDEAKHRELVDKLAAEL</sequence>
<accession>Q1QSC6</accession>
<name>ATPF_CHRSD</name>